<feature type="signal peptide" evidence="2">
    <location>
        <begin position="1"/>
        <end position="22"/>
    </location>
</feature>
<feature type="chain" id="PRO_0000026943" description="Serine protease HTRA1">
    <location>
        <begin position="23"/>
        <end position="480"/>
    </location>
</feature>
<feature type="domain" description="IGFBP N-terminal" evidence="4">
    <location>
        <begin position="33"/>
        <end position="113"/>
    </location>
</feature>
<feature type="domain" description="Kazal-like" evidence="5">
    <location>
        <begin position="98"/>
        <end position="157"/>
    </location>
</feature>
<feature type="domain" description="PDZ" evidence="3">
    <location>
        <begin position="365"/>
        <end position="467"/>
    </location>
</feature>
<feature type="region of interest" description="Serine protease">
    <location>
        <begin position="204"/>
        <end position="364"/>
    </location>
</feature>
<feature type="active site" description="Charge relay system" evidence="12">
    <location>
        <position position="220"/>
    </location>
</feature>
<feature type="active site" description="Charge relay system" evidence="12">
    <location>
        <position position="250"/>
    </location>
</feature>
<feature type="active site" description="Charge relay system" evidence="12">
    <location>
        <position position="328"/>
    </location>
</feature>
<feature type="site" description="Involved in trimer stabilization" evidence="12">
    <location>
        <position position="169"/>
    </location>
</feature>
<feature type="site" description="Involved in trimer stabilization" evidence="12">
    <location>
        <position position="171"/>
    </location>
</feature>
<feature type="site" description="Involved in trimer stabilization" evidence="12">
    <location>
        <position position="278"/>
    </location>
</feature>
<feature type="disulfide bond" evidence="4">
    <location>
        <begin position="37"/>
        <end position="62"/>
    </location>
</feature>
<feature type="disulfide bond" evidence="4">
    <location>
        <begin position="41"/>
        <end position="64"/>
    </location>
</feature>
<feature type="disulfide bond" evidence="4">
    <location>
        <begin position="46"/>
        <end position="65"/>
    </location>
</feature>
<feature type="disulfide bond" evidence="4">
    <location>
        <begin position="53"/>
        <end position="68"/>
    </location>
</feature>
<feature type="disulfide bond" evidence="4">
    <location>
        <begin position="76"/>
        <end position="89"/>
    </location>
</feature>
<feature type="disulfide bond" evidence="4">
    <location>
        <begin position="83"/>
        <end position="110"/>
    </location>
</feature>
<feature type="disulfide bond" evidence="15">
    <location>
        <begin position="112"/>
        <end position="130"/>
    </location>
</feature>
<feature type="disulfide bond" evidence="5">
    <location>
        <begin position="119"/>
        <end position="155"/>
    </location>
</feature>
<feature type="sequence variant" id="VAR_076371" description="In dbSNP:rs369149111." evidence="13">
    <original>A</original>
    <variation>V</variation>
    <location>
        <position position="20"/>
    </location>
</feature>
<feature type="sequence variant" id="VAR_076372" description="In dbSNP:rs2097481474." evidence="13">
    <original>E</original>
    <variation>G</variation>
    <location>
        <position position="51"/>
    </location>
</feature>
<feature type="sequence variant" id="VAR_076373" description="In CADASIL2." evidence="13">
    <original>S</original>
    <variation>R</variation>
    <location>
        <position position="121"/>
    </location>
</feature>
<feature type="sequence variant" id="VAR_076374" description="In CADASIL2." evidence="13">
    <original>A</original>
    <variation>S</variation>
    <location>
        <position position="123"/>
    </location>
</feature>
<feature type="sequence variant" id="VAR_076375" description="In CADASIL2." evidence="13">
    <original>R</original>
    <variation>G</variation>
    <location>
        <position position="133"/>
    </location>
</feature>
<feature type="sequence variant" id="VAR_076376" description="In CADASIL2; loss of proteolytic activity; dbSNP:rs864622781." evidence="13">
    <original>R</original>
    <variation>L</variation>
    <location>
        <position position="166"/>
    </location>
</feature>
<feature type="sequence variant" id="VAR_076377" description="In CADASIL2; loss of proteolytic activity; dbSNP:rs781563777." evidence="13">
    <original>A</original>
    <variation>P</variation>
    <location>
        <position position="173"/>
    </location>
</feature>
<feature type="sequence variant" id="VAR_063148" description="In CARASIL; has 21 to 50% normal protease activity; is unable to suppress TGF-beta activity; dbSNP:rs113993968." evidence="10">
    <original>A</original>
    <variation>T</variation>
    <location>
        <position position="252"/>
    </location>
</feature>
<feature type="sequence variant" id="VAR_076378" description="In CADASIL2; partial loss of proteolytic activity." evidence="13">
    <original>S</original>
    <variation>G</variation>
    <location>
        <position position="284"/>
    </location>
</feature>
<feature type="sequence variant" id="VAR_076379" description="In CADASIL2; loss of proteolytic activity; dbSNP:rs864622782." evidence="13">
    <original>S</original>
    <variation>R</variation>
    <location>
        <position position="284"/>
    </location>
</feature>
<feature type="sequence variant" id="VAR_076380" description="In CADASIL2; loss of proteolytic activity." evidence="13">
    <original>P</original>
    <variation>Q</variation>
    <location>
        <position position="285"/>
    </location>
</feature>
<feature type="sequence variant" id="VAR_076381" description="In CADASIL2; loss of proteolytic activity." evidence="13">
    <original>F</original>
    <variation>V</variation>
    <location>
        <position position="286"/>
    </location>
</feature>
<feature type="sequence variant" id="VAR_063149" description="In CARASIL; has 21 to 50% normal protease activity; is unable to suppress TGF-beta activity; dbSNP:rs113993969." evidence="10">
    <original>V</original>
    <variation>M</variation>
    <location>
        <position position="297"/>
    </location>
</feature>
<feature type="sequence variant" id="VAR_076382" description="In CADASIL2; uncertain significance; small decrease, if any, in proteolytic activity; dbSNP:rs772225907." evidence="13">
    <original>D</original>
    <variation>H</variation>
    <location>
        <position position="450"/>
    </location>
</feature>
<feature type="mutagenesis site" description="Loss of activity." evidence="12 14">
    <original>S</original>
    <variation>A</variation>
    <location>
        <position position="328"/>
    </location>
</feature>
<feature type="sequence conflict" description="In Ref. 4; AAC97211." evidence="15" ref="4">
    <original>I</original>
    <variation>T</variation>
    <location>
        <position position="323"/>
    </location>
</feature>
<feature type="helix" evidence="22">
    <location>
        <begin position="43"/>
        <end position="45"/>
    </location>
</feature>
<feature type="strand" evidence="22">
    <location>
        <begin position="57"/>
        <end position="59"/>
    </location>
</feature>
<feature type="strand" evidence="22">
    <location>
        <begin position="65"/>
        <end position="68"/>
    </location>
</feature>
<feature type="strand" evidence="22">
    <location>
        <begin position="74"/>
        <end position="77"/>
    </location>
</feature>
<feature type="strand" evidence="22">
    <location>
        <begin position="87"/>
        <end position="90"/>
    </location>
</feature>
<feature type="strand" evidence="22">
    <location>
        <begin position="108"/>
        <end position="113"/>
    </location>
</feature>
<feature type="strand" evidence="22">
    <location>
        <begin position="118"/>
        <end position="123"/>
    </location>
</feature>
<feature type="strand" evidence="22">
    <location>
        <begin position="125"/>
        <end position="128"/>
    </location>
</feature>
<feature type="helix" evidence="22">
    <location>
        <begin position="129"/>
        <end position="141"/>
    </location>
</feature>
<feature type="helix" evidence="24">
    <location>
        <begin position="165"/>
        <end position="168"/>
    </location>
</feature>
<feature type="helix" evidence="24">
    <location>
        <begin position="172"/>
        <end position="179"/>
    </location>
</feature>
<feature type="turn" evidence="24">
    <location>
        <begin position="180"/>
        <end position="182"/>
    </location>
</feature>
<feature type="strand" evidence="24">
    <location>
        <begin position="183"/>
        <end position="191"/>
    </location>
</feature>
<feature type="turn" evidence="25">
    <location>
        <begin position="193"/>
        <end position="195"/>
    </location>
</feature>
<feature type="strand" evidence="24">
    <location>
        <begin position="198"/>
        <end position="208"/>
    </location>
</feature>
<feature type="turn" evidence="18">
    <location>
        <begin position="211"/>
        <end position="213"/>
    </location>
</feature>
<feature type="strand" evidence="24">
    <location>
        <begin position="214"/>
        <end position="217"/>
    </location>
</feature>
<feature type="turn" evidence="24">
    <location>
        <begin position="219"/>
        <end position="221"/>
    </location>
</feature>
<feature type="strand" evidence="24">
    <location>
        <begin position="224"/>
        <end position="231"/>
    </location>
</feature>
<feature type="strand" evidence="19">
    <location>
        <begin position="233"/>
        <end position="235"/>
    </location>
</feature>
<feature type="strand" evidence="24">
    <location>
        <begin position="237"/>
        <end position="246"/>
    </location>
</feature>
<feature type="turn" evidence="24">
    <location>
        <begin position="247"/>
        <end position="250"/>
    </location>
</feature>
<feature type="strand" evidence="24">
    <location>
        <begin position="251"/>
        <end position="255"/>
    </location>
</feature>
<feature type="helix" evidence="21">
    <location>
        <begin position="270"/>
        <end position="272"/>
    </location>
</feature>
<feature type="strand" evidence="24">
    <location>
        <begin position="278"/>
        <end position="282"/>
    </location>
</feature>
<feature type="strand" evidence="23">
    <location>
        <begin position="285"/>
        <end position="288"/>
    </location>
</feature>
<feature type="strand" evidence="24">
    <location>
        <begin position="292"/>
        <end position="297"/>
    </location>
</feature>
<feature type="strand" evidence="20">
    <location>
        <begin position="301"/>
        <end position="303"/>
    </location>
</feature>
<feature type="helix" evidence="19">
    <location>
        <begin position="304"/>
        <end position="306"/>
    </location>
</feature>
<feature type="strand" evidence="24">
    <location>
        <begin position="319"/>
        <end position="321"/>
    </location>
</feature>
<feature type="helix" evidence="24">
    <location>
        <begin position="325"/>
        <end position="327"/>
    </location>
</feature>
<feature type="strand" evidence="24">
    <location>
        <begin position="328"/>
        <end position="333"/>
    </location>
</feature>
<feature type="strand" evidence="24">
    <location>
        <begin position="339"/>
        <end position="348"/>
    </location>
</feature>
<feature type="strand" evidence="24">
    <location>
        <begin position="351"/>
        <end position="356"/>
    </location>
</feature>
<feature type="helix" evidence="24">
    <location>
        <begin position="357"/>
        <end position="369"/>
    </location>
</feature>
<feature type="strand" evidence="17">
    <location>
        <begin position="380"/>
        <end position="382"/>
    </location>
</feature>
<feature type="strand" evidence="16">
    <location>
        <begin position="384"/>
        <end position="389"/>
    </location>
</feature>
<feature type="helix" evidence="16">
    <location>
        <begin position="392"/>
        <end position="401"/>
    </location>
</feature>
<feature type="strand" evidence="16">
    <location>
        <begin position="411"/>
        <end position="417"/>
    </location>
</feature>
<feature type="strand" evidence="16">
    <location>
        <begin position="419"/>
        <end position="421"/>
    </location>
</feature>
<feature type="helix" evidence="16">
    <location>
        <begin position="422"/>
        <end position="426"/>
    </location>
</feature>
<feature type="strand" evidence="17">
    <location>
        <begin position="433"/>
        <end position="437"/>
    </location>
</feature>
<feature type="helix" evidence="16">
    <location>
        <begin position="445"/>
        <end position="454"/>
    </location>
</feature>
<feature type="strand" evidence="16">
    <location>
        <begin position="456"/>
        <end position="464"/>
    </location>
</feature>
<feature type="strand" evidence="16">
    <location>
        <begin position="467"/>
        <end position="473"/>
    </location>
</feature>
<feature type="strand" evidence="17">
    <location>
        <begin position="476"/>
        <end position="478"/>
    </location>
</feature>
<accession>Q92743</accession>
<accession>D3DRE4</accession>
<accession>Q9UNS5</accession>
<organism>
    <name type="scientific">Homo sapiens</name>
    <name type="common">Human</name>
    <dbReference type="NCBI Taxonomy" id="9606"/>
    <lineage>
        <taxon>Eukaryota</taxon>
        <taxon>Metazoa</taxon>
        <taxon>Chordata</taxon>
        <taxon>Craniata</taxon>
        <taxon>Vertebrata</taxon>
        <taxon>Euteleostomi</taxon>
        <taxon>Mammalia</taxon>
        <taxon>Eutheria</taxon>
        <taxon>Euarchontoglires</taxon>
        <taxon>Primates</taxon>
        <taxon>Haplorrhini</taxon>
        <taxon>Catarrhini</taxon>
        <taxon>Hominidae</taxon>
        <taxon>Homo</taxon>
    </lineage>
</organism>
<protein>
    <recommendedName>
        <fullName>Serine protease HTRA1</fullName>
        <ecNumber>3.4.21.-</ecNumber>
    </recommendedName>
    <alternativeName>
        <fullName>High-temperature requirement A serine peptidase 1</fullName>
    </alternativeName>
    <alternativeName>
        <fullName>L56</fullName>
    </alternativeName>
    <alternativeName>
        <fullName>Serine protease 11</fullName>
    </alternativeName>
</protein>
<reference key="1">
    <citation type="journal article" date="1996" name="FEBS Lett.">
        <title>Primary structure of a putative serine protease specific for IGF-binding proteins.</title>
        <authorList>
            <person name="Zumbrunn J."/>
            <person name="Trueb B."/>
        </authorList>
    </citation>
    <scope>NUCLEOTIDE SEQUENCE [MRNA]</scope>
    <source>
        <tissue>Placenta</tissue>
    </source>
</reference>
<reference key="2">
    <citation type="submission" date="1999-06" db="EMBL/GenBank/DDBJ databases">
        <title>Genomic organization and promoter characterization of the human HTRA (PRSS11) gene.</title>
        <authorList>
            <person name="Crowl R.M."/>
            <person name="Luk D."/>
            <person name="Milnamow M."/>
        </authorList>
    </citation>
    <scope>NUCLEOTIDE SEQUENCE [GENOMIC DNA]</scope>
</reference>
<reference key="3">
    <citation type="submission" date="2005-09" db="EMBL/GenBank/DDBJ databases">
        <authorList>
            <person name="Mural R.J."/>
            <person name="Istrail S."/>
            <person name="Sutton G.G."/>
            <person name="Florea L."/>
            <person name="Halpern A.L."/>
            <person name="Mobarry C.M."/>
            <person name="Lippert R."/>
            <person name="Walenz B."/>
            <person name="Shatkay H."/>
            <person name="Dew I."/>
            <person name="Miller J.R."/>
            <person name="Flanigan M.J."/>
            <person name="Edwards N.J."/>
            <person name="Bolanos R."/>
            <person name="Fasulo D."/>
            <person name="Halldorsson B.V."/>
            <person name="Hannenhalli S."/>
            <person name="Turner R."/>
            <person name="Yooseph S."/>
            <person name="Lu F."/>
            <person name="Nusskern D.R."/>
            <person name="Shue B.C."/>
            <person name="Zheng X.H."/>
            <person name="Zhong F."/>
            <person name="Delcher A.L."/>
            <person name="Huson D.H."/>
            <person name="Kravitz S.A."/>
            <person name="Mouchard L."/>
            <person name="Reinert K."/>
            <person name="Remington K.A."/>
            <person name="Clark A.G."/>
            <person name="Waterman M.S."/>
            <person name="Eichler E.E."/>
            <person name="Adams M.D."/>
            <person name="Hunkapiller M.W."/>
            <person name="Myers E.W."/>
            <person name="Venter J.C."/>
        </authorList>
    </citation>
    <scope>NUCLEOTIDE SEQUENCE [LARGE SCALE GENOMIC DNA]</scope>
</reference>
<reference key="4">
    <citation type="journal article" date="1998" name="J. Biol. Chem.">
        <title>Human HtrA, an evolutionarily conserved serine protease identified as a differentially expressed gene product in osteoarthritic cartilage.</title>
        <authorList>
            <person name="Hu S.I."/>
            <person name="Carozza M."/>
            <person name="Klein M."/>
            <person name="Nantermet P."/>
            <person name="Luk D."/>
            <person name="Crowl R.M."/>
        </authorList>
    </citation>
    <scope>NUCLEOTIDE SEQUENCE [MRNA] OF 144-480</scope>
    <scope>PROTEIN SEQUENCE OF 33-44</scope>
    <scope>FUNCTION</scope>
    <scope>SUBCELLULAR LOCATION</scope>
    <scope>TISSUE SPECIFICITY</scope>
    <scope>MUTAGENESIS OF SER-328</scope>
    <source>
        <tissue>Cartilage</tissue>
    </source>
</reference>
<reference key="5">
    <citation type="journal article" date="2004" name="J. Histochem. Cytochem.">
        <title>The serine protease HtrA1 is upregulated in the human placenta during pregnancy.</title>
        <authorList>
            <person name="De Luca A."/>
            <person name="De Falco M."/>
            <person name="Fedele V."/>
            <person name="Cobellis L."/>
            <person name="Mastrogiacomo A."/>
            <person name="Laforgia V."/>
            <person name="Tuduce I.L."/>
            <person name="Campioni M."/>
            <person name="Giraldi D."/>
            <person name="Paggi M.G."/>
            <person name="Baldi A."/>
        </authorList>
    </citation>
    <scope>SUBCELLULAR LOCATION</scope>
    <scope>TISSUE SPECIFICITY</scope>
    <scope>DEVELOPMENTAL STAGE</scope>
</reference>
<reference key="6">
    <citation type="journal article" date="2006" name="J. Biol. Chem.">
        <title>The role of human HtrA1 in arthritic disease.</title>
        <authorList>
            <person name="Grau S."/>
            <person name="Richards P.J."/>
            <person name="Kerr B."/>
            <person name="Hughes C."/>
            <person name="Caterson B."/>
            <person name="Williams A.S."/>
            <person name="Junker U."/>
            <person name="Jones S.A."/>
            <person name="Clausen T."/>
            <person name="Ehrmann M."/>
        </authorList>
    </citation>
    <scope>FUNCTION</scope>
    <scope>TISSUE SPECIFICITY</scope>
</reference>
<reference key="7">
    <citation type="journal article" date="2006" name="Science">
        <title>HTRA1 promoter polymorphism in wet age-related macular degeneration.</title>
        <authorList>
            <person name="Dewan A."/>
            <person name="Liu M."/>
            <person name="Hartman S."/>
            <person name="Zhang S.S.-M."/>
            <person name="Liu D.T.L."/>
            <person name="Zhao C."/>
            <person name="Tam P.O.S."/>
            <person name="Chan W.M."/>
            <person name="Lam D.S.C."/>
            <person name="Snyder M."/>
            <person name="Barnstable C."/>
            <person name="Pang C.P."/>
            <person name="Hoh J."/>
        </authorList>
    </citation>
    <scope>INVOLVEMENT IN SUSCEPTIBILITY TO ARMD7</scope>
</reference>
<reference key="8">
    <citation type="journal article" date="2006" name="Science">
        <title>A variant of the HTRA1 gene increases susceptibility to age-related macular degeneration.</title>
        <authorList>
            <person name="Yang Z."/>
            <person name="Camp N.J."/>
            <person name="Sun H."/>
            <person name="Tong Z."/>
            <person name="Gibbs D."/>
            <person name="Cameron D.J."/>
            <person name="Chen H."/>
            <person name="Zhao Y."/>
            <person name="Pearson E."/>
            <person name="Li X."/>
            <person name="Chien J."/>
            <person name="DeWan A."/>
            <person name="Harmon J."/>
            <person name="Bernstein P.S."/>
            <person name="Shridhar V."/>
            <person name="Zabriskie N.A."/>
            <person name="Hoh J."/>
            <person name="Howes K."/>
            <person name="Zhang K."/>
        </authorList>
    </citation>
    <scope>INVOLVEMENT IN SUSCEPTIBILITY TO ARMD7</scope>
</reference>
<reference key="9">
    <citation type="journal article" date="2010" name="Mol. Cancer Res.">
        <title>The serine protease HtrA1 specifically interacts and degrades the tuberous sclerosis complex 2 protein.</title>
        <authorList>
            <person name="Campioni M."/>
            <person name="Severino A."/>
            <person name="Manente L."/>
            <person name="Tuduce I.L."/>
            <person name="Toldo S."/>
            <person name="Caraglia M."/>
            <person name="Crispi S."/>
            <person name="Ehrmann M."/>
            <person name="He X."/>
            <person name="Maguire J."/>
            <person name="De Falco M."/>
            <person name="De Luca A."/>
            <person name="Shridhar V."/>
            <person name="Baldi A."/>
        </authorList>
    </citation>
    <scope>FUNCTION</scope>
    <scope>SUBCELLULAR LOCATION</scope>
</reference>
<reference key="10">
    <citation type="journal article" date="2015" name="Brain">
        <title>Heterozygous HTRA1 mutations are associated with autosomal dominant cerebral small vessel disease.</title>
        <authorList>
            <person name="Verdura E."/>
            <person name="Herve D."/>
            <person name="Scharrer E."/>
            <person name="del Mar Amador M."/>
            <person name="Guyant-Marechal L."/>
            <person name="Philippi A."/>
            <person name="Corlobe A."/>
            <person name="Bergametti F."/>
            <person name="Gazal S."/>
            <person name="Prieto-Morin C."/>
            <person name="Beaufort N."/>
            <person name="Le Bail B."/>
            <person name="Viakhireva I."/>
            <person name="Dichgans M."/>
            <person name="Chabriat H."/>
            <person name="Haffner C."/>
            <person name="Tournier-Lasserve E."/>
        </authorList>
    </citation>
    <scope>INVOLVEMENT IN CADASIL2</scope>
    <scope>VARIANTS CADASIL2 ARG-121; SER-123; GLY-133; LEU-166; PRO-173; ARG-284; GLY-284; GLN-285; VAL-286 AND HIS-450</scope>
    <scope>VARIANTS VAL-20 AND GLY-51</scope>
    <scope>CHARACTERIZATION OF VARIANTS CADASIL2 ARG-121; LEU-166; PRO-173; ARG-284; GLY-284; GLN-285; VAL-286 AND HIS-450</scope>
</reference>
<reference key="11">
    <citation type="submission" date="2008-04" db="PDB data bank">
        <title>Solution structure of the PDZ-domain of human protease HTRA 1 precursor.</title>
        <authorList>
            <consortium name="RIKEN structural genomics initiative (RSGI)"/>
        </authorList>
    </citation>
    <scope>STRUCTURE BY NMR OF 367-480</scope>
</reference>
<reference key="12">
    <citation type="journal article" date="2011" name="Nat. Struct. Mol. Biol.">
        <title>Substrate-induced remodeling of the active site regulates human HTRA1 activity.</title>
        <authorList>
            <person name="Truebestein L."/>
            <person name="Tennstaedt A."/>
            <person name="Monig T."/>
            <person name="Krojer T."/>
            <person name="Canellas F."/>
            <person name="Kaiser M."/>
            <person name="Clausen T."/>
            <person name="Ehrmann M."/>
        </authorList>
    </citation>
    <scope>X-RAY CRYSTALLOGRAPHY (2.75 ANGSTROMS) OF 158-480</scope>
    <scope>HOMOTRIMERIZATION</scope>
    <scope>SUBCELLULAR LOCATION</scope>
    <scope>MUTAGENESIS OF SER-328</scope>
    <scope>SITE</scope>
    <scope>ACTIVE SITE</scope>
</reference>
<reference key="13">
    <citation type="journal article" date="2009" name="N. Engl. J. Med.">
        <title>Association of HTRA1 mutations and familial ischemic cerebral small-vessel disease.</title>
        <authorList>
            <person name="Hara K."/>
            <person name="Shiga A."/>
            <person name="Fukutake T."/>
            <person name="Nozaki H."/>
            <person name="Miyashita A."/>
            <person name="Yokoseki A."/>
            <person name="Kawata H."/>
            <person name="Koyama A."/>
            <person name="Arima K."/>
            <person name="Takahashi T."/>
            <person name="Ikeda M."/>
            <person name="Shiota H."/>
            <person name="Tamura M."/>
            <person name="Shimoe Y."/>
            <person name="Hirayama M."/>
            <person name="Arisato T."/>
            <person name="Yanagawa S."/>
            <person name="Tanaka A."/>
            <person name="Nakano I."/>
            <person name="Ikeda S."/>
            <person name="Yoshida Y."/>
            <person name="Yamamoto T."/>
            <person name="Ikeuchi T."/>
            <person name="Kuwano R."/>
            <person name="Nishizawa M."/>
            <person name="Tsuji S."/>
            <person name="Onodera O."/>
        </authorList>
    </citation>
    <scope>VARIANTS CARASIL THR-252 AND MET-297</scope>
    <scope>CHARACTERIZATION OF VARIANTS CARASIL THR-252 AND MET-297</scope>
</reference>
<dbReference type="EC" id="3.4.21.-"/>
<dbReference type="EMBL" id="Y07921">
    <property type="protein sequence ID" value="CAA69226.1"/>
    <property type="molecule type" value="mRNA"/>
</dbReference>
<dbReference type="EMBL" id="AF157623">
    <property type="protein sequence ID" value="AAD41525.1"/>
    <property type="molecule type" value="Genomic_DNA"/>
</dbReference>
<dbReference type="EMBL" id="CH471066">
    <property type="protein sequence ID" value="EAW49312.1"/>
    <property type="molecule type" value="Genomic_DNA"/>
</dbReference>
<dbReference type="EMBL" id="CH471066">
    <property type="protein sequence ID" value="EAW49313.1"/>
    <property type="molecule type" value="Genomic_DNA"/>
</dbReference>
<dbReference type="EMBL" id="AF097709">
    <property type="protein sequence ID" value="AAC97211.1"/>
    <property type="molecule type" value="mRNA"/>
</dbReference>
<dbReference type="CCDS" id="CCDS7630.1"/>
<dbReference type="RefSeq" id="NP_002766.1">
    <property type="nucleotide sequence ID" value="NM_002775.5"/>
</dbReference>
<dbReference type="PDB" id="2JOA">
    <property type="method" value="NMR"/>
    <property type="chains" value="A=380-480"/>
</dbReference>
<dbReference type="PDB" id="2YTW">
    <property type="method" value="NMR"/>
    <property type="chains" value="A=370-480"/>
</dbReference>
<dbReference type="PDB" id="3NUM">
    <property type="method" value="X-ray"/>
    <property type="resolution" value="2.75 A"/>
    <property type="chains" value="A=158-480"/>
</dbReference>
<dbReference type="PDB" id="3NWU">
    <property type="method" value="X-ray"/>
    <property type="resolution" value="3.20 A"/>
    <property type="chains" value="A/B/C=158-375"/>
</dbReference>
<dbReference type="PDB" id="3NZI">
    <property type="method" value="X-ray"/>
    <property type="resolution" value="2.75 A"/>
    <property type="chains" value="A=158-480"/>
</dbReference>
<dbReference type="PDB" id="3TJN">
    <property type="method" value="X-ray"/>
    <property type="resolution" value="3.00 A"/>
    <property type="chains" value="A/B/D=161-367"/>
</dbReference>
<dbReference type="PDB" id="3TJO">
    <property type="method" value="X-ray"/>
    <property type="resolution" value="2.30 A"/>
    <property type="chains" value="A/B/D=161-370"/>
</dbReference>
<dbReference type="PDB" id="3TJQ">
    <property type="method" value="X-ray"/>
    <property type="resolution" value="2.00 A"/>
    <property type="chains" value="A=35-156"/>
</dbReference>
<dbReference type="PDB" id="6Z0E">
    <property type="method" value="X-ray"/>
    <property type="resolution" value="2.60 A"/>
    <property type="chains" value="A/B=161-375"/>
</dbReference>
<dbReference type="PDB" id="6Z0X">
    <property type="method" value="X-ray"/>
    <property type="resolution" value="3.10 A"/>
    <property type="chains" value="A/B/C=161-375"/>
</dbReference>
<dbReference type="PDB" id="6Z0Y">
    <property type="method" value="X-ray"/>
    <property type="resolution" value="2.20 A"/>
    <property type="chains" value="A/B/C=161-375"/>
</dbReference>
<dbReference type="PDB" id="7SJN">
    <property type="method" value="EM"/>
    <property type="resolution" value="3.40 A"/>
    <property type="chains" value="A/B/C=161-367"/>
</dbReference>
<dbReference type="PDB" id="7SJO">
    <property type="method" value="EM"/>
    <property type="resolution" value="3.30 A"/>
    <property type="chains" value="A/B/C=161-379"/>
</dbReference>
<dbReference type="PDB" id="7SJP">
    <property type="method" value="X-ray"/>
    <property type="resolution" value="2.10 A"/>
    <property type="chains" value="E=190-200"/>
</dbReference>
<dbReference type="PDB" id="8SDM">
    <property type="method" value="X-ray"/>
    <property type="resolution" value="3.05 A"/>
    <property type="chains" value="A/B/C=161-379"/>
</dbReference>
<dbReference type="PDB" id="8SDP">
    <property type="method" value="X-ray"/>
    <property type="resolution" value="2.87 A"/>
    <property type="chains" value="A/B/C=161-379"/>
</dbReference>
<dbReference type="PDB" id="8SE7">
    <property type="method" value="X-ray"/>
    <property type="resolution" value="2.96 A"/>
    <property type="chains" value="A/B/C/D/E/F/K/L/M/Q/R/S=161-379"/>
</dbReference>
<dbReference type="PDB" id="8SE8">
    <property type="method" value="X-ray"/>
    <property type="resolution" value="3.18 A"/>
    <property type="chains" value="A/B/C/D/E/F/K/L/M/Q/R/S=161-379"/>
</dbReference>
<dbReference type="PDBsum" id="2JOA"/>
<dbReference type="PDBsum" id="2YTW"/>
<dbReference type="PDBsum" id="3NUM"/>
<dbReference type="PDBsum" id="3NWU"/>
<dbReference type="PDBsum" id="3NZI"/>
<dbReference type="PDBsum" id="3TJN"/>
<dbReference type="PDBsum" id="3TJO"/>
<dbReference type="PDBsum" id="3TJQ"/>
<dbReference type="PDBsum" id="6Z0E"/>
<dbReference type="PDBsum" id="6Z0X"/>
<dbReference type="PDBsum" id="6Z0Y"/>
<dbReference type="PDBsum" id="7SJN"/>
<dbReference type="PDBsum" id="7SJO"/>
<dbReference type="PDBsum" id="7SJP"/>
<dbReference type="PDBsum" id="8SDM"/>
<dbReference type="PDBsum" id="8SDP"/>
<dbReference type="PDBsum" id="8SE7"/>
<dbReference type="PDBsum" id="8SE8"/>
<dbReference type="BMRB" id="Q92743"/>
<dbReference type="EMDB" id="EMD-25162"/>
<dbReference type="EMDB" id="EMD-25163"/>
<dbReference type="SMR" id="Q92743"/>
<dbReference type="BioGRID" id="111635">
    <property type="interactions" value="43"/>
</dbReference>
<dbReference type="DIP" id="DIP-33195N"/>
<dbReference type="FunCoup" id="Q92743">
    <property type="interactions" value="276"/>
</dbReference>
<dbReference type="IntAct" id="Q92743">
    <property type="interactions" value="50"/>
</dbReference>
<dbReference type="MINT" id="Q92743"/>
<dbReference type="STRING" id="9606.ENSP00000357980"/>
<dbReference type="BindingDB" id="Q92743"/>
<dbReference type="ChEMBL" id="CHEMBL4523419"/>
<dbReference type="GuidetoPHARMACOLOGY" id="3194"/>
<dbReference type="MEROPS" id="S01.277"/>
<dbReference type="iPTMnet" id="Q92743"/>
<dbReference type="PhosphoSitePlus" id="Q92743"/>
<dbReference type="BioMuta" id="HTRA1"/>
<dbReference type="DMDM" id="18202620"/>
<dbReference type="jPOST" id="Q92743"/>
<dbReference type="MassIVE" id="Q92743"/>
<dbReference type="PaxDb" id="9606-ENSP00000357980"/>
<dbReference type="PeptideAtlas" id="Q92743"/>
<dbReference type="ProteomicsDB" id="75437"/>
<dbReference type="Pumba" id="Q92743"/>
<dbReference type="ABCD" id="Q92743">
    <property type="antibodies" value="3 sequenced antibodies"/>
</dbReference>
<dbReference type="Antibodypedia" id="32265">
    <property type="antibodies" value="291 antibodies from 32 providers"/>
</dbReference>
<dbReference type="DNASU" id="5654"/>
<dbReference type="Ensembl" id="ENST00000368984.8">
    <property type="protein sequence ID" value="ENSP00000357980.3"/>
    <property type="gene ID" value="ENSG00000166033.13"/>
</dbReference>
<dbReference type="GeneID" id="5654"/>
<dbReference type="KEGG" id="hsa:5654"/>
<dbReference type="MANE-Select" id="ENST00000368984.8">
    <property type="protein sequence ID" value="ENSP00000357980.3"/>
    <property type="RefSeq nucleotide sequence ID" value="NM_002775.5"/>
    <property type="RefSeq protein sequence ID" value="NP_002766.1"/>
</dbReference>
<dbReference type="UCSC" id="uc001lgj.2">
    <property type="organism name" value="human"/>
</dbReference>
<dbReference type="AGR" id="HGNC:9476"/>
<dbReference type="CTD" id="5654"/>
<dbReference type="DisGeNET" id="5654"/>
<dbReference type="GeneCards" id="HTRA1"/>
<dbReference type="GeneReviews" id="HTRA1"/>
<dbReference type="HGNC" id="HGNC:9476">
    <property type="gene designation" value="HTRA1"/>
</dbReference>
<dbReference type="HPA" id="ENSG00000166033">
    <property type="expression patterns" value="Tissue enhanced (ovary)"/>
</dbReference>
<dbReference type="MalaCards" id="HTRA1"/>
<dbReference type="MIM" id="600142">
    <property type="type" value="phenotype"/>
</dbReference>
<dbReference type="MIM" id="602194">
    <property type="type" value="gene"/>
</dbReference>
<dbReference type="MIM" id="610149">
    <property type="type" value="phenotype"/>
</dbReference>
<dbReference type="MIM" id="616779">
    <property type="type" value="phenotype"/>
</dbReference>
<dbReference type="neXtProt" id="NX_Q92743"/>
<dbReference type="OpenTargets" id="ENSG00000166033"/>
<dbReference type="Orphanet" id="199354">
    <property type="disease" value="Cerebral autosomal recessive arteriopathy-subcortical infarcts-leukoencephalopathy"/>
</dbReference>
<dbReference type="Orphanet" id="482077">
    <property type="disease" value="HTRA1-related autosomal dominant cerebral small vessel disease"/>
</dbReference>
<dbReference type="Orphanet" id="252128">
    <property type="disease" value="Malignant peripheral nerve sheath tumor with perineurial differentiation"/>
</dbReference>
<dbReference type="Orphanet" id="252212">
    <property type="disease" value="Malignant triton tumor"/>
</dbReference>
<dbReference type="PharmGKB" id="PA33829"/>
<dbReference type="VEuPathDB" id="HostDB:ENSG00000166033"/>
<dbReference type="eggNOG" id="KOG1320">
    <property type="taxonomic scope" value="Eukaryota"/>
</dbReference>
<dbReference type="GeneTree" id="ENSGT00940000156955"/>
<dbReference type="HOGENOM" id="CLU_020120_6_2_1"/>
<dbReference type="InParanoid" id="Q92743"/>
<dbReference type="OrthoDB" id="4217619at2759"/>
<dbReference type="PAN-GO" id="Q92743">
    <property type="GO annotations" value="5 GO annotations based on evolutionary models"/>
</dbReference>
<dbReference type="PhylomeDB" id="Q92743"/>
<dbReference type="TreeFam" id="TF323480"/>
<dbReference type="BRENDA" id="3.4.21.107">
    <property type="organism ID" value="2681"/>
</dbReference>
<dbReference type="BRENDA" id="3.4.21.108">
    <property type="organism ID" value="2681"/>
</dbReference>
<dbReference type="PathwayCommons" id="Q92743"/>
<dbReference type="Reactome" id="R-HSA-1474228">
    <property type="pathway name" value="Degradation of the extracellular matrix"/>
</dbReference>
<dbReference type="SignaLink" id="Q92743"/>
<dbReference type="BioGRID-ORCS" id="5654">
    <property type="hits" value="16 hits in 1157 CRISPR screens"/>
</dbReference>
<dbReference type="ChiTaRS" id="HTRA1">
    <property type="organism name" value="human"/>
</dbReference>
<dbReference type="EvolutionaryTrace" id="Q92743"/>
<dbReference type="GeneWiki" id="HTRA1"/>
<dbReference type="GenomeRNAi" id="5654"/>
<dbReference type="Pharos" id="Q92743">
    <property type="development level" value="Tchem"/>
</dbReference>
<dbReference type="PRO" id="PR:Q92743"/>
<dbReference type="Proteomes" id="UP000005640">
    <property type="component" value="Chromosome 10"/>
</dbReference>
<dbReference type="RNAct" id="Q92743">
    <property type="molecule type" value="protein"/>
</dbReference>
<dbReference type="Bgee" id="ENSG00000166033">
    <property type="expression patterns" value="Expressed in tendon of biceps brachii and 204 other cell types or tissues"/>
</dbReference>
<dbReference type="ExpressionAtlas" id="Q92743">
    <property type="expression patterns" value="baseline and differential"/>
</dbReference>
<dbReference type="GO" id="GO:0062023">
    <property type="term" value="C:collagen-containing extracellular matrix"/>
    <property type="evidence" value="ECO:0007005"/>
    <property type="project" value="BHF-UCL"/>
</dbReference>
<dbReference type="GO" id="GO:0005829">
    <property type="term" value="C:cytosol"/>
    <property type="evidence" value="ECO:0007669"/>
    <property type="project" value="UniProtKB-SubCell"/>
</dbReference>
<dbReference type="GO" id="GO:0070062">
    <property type="term" value="C:extracellular exosome"/>
    <property type="evidence" value="ECO:0007005"/>
    <property type="project" value="UniProtKB"/>
</dbReference>
<dbReference type="GO" id="GO:0005576">
    <property type="term" value="C:extracellular region"/>
    <property type="evidence" value="ECO:0000304"/>
    <property type="project" value="Reactome"/>
</dbReference>
<dbReference type="GO" id="GO:0005615">
    <property type="term" value="C:extracellular space"/>
    <property type="evidence" value="ECO:0000304"/>
    <property type="project" value="ProtInc"/>
</dbReference>
<dbReference type="GO" id="GO:0005886">
    <property type="term" value="C:plasma membrane"/>
    <property type="evidence" value="ECO:0000314"/>
    <property type="project" value="HPA"/>
</dbReference>
<dbReference type="GO" id="GO:0019838">
    <property type="term" value="F:growth factor binding"/>
    <property type="evidence" value="ECO:0007669"/>
    <property type="project" value="UniProtKB-KW"/>
</dbReference>
<dbReference type="GO" id="GO:0042802">
    <property type="term" value="F:identical protein binding"/>
    <property type="evidence" value="ECO:0000353"/>
    <property type="project" value="IntAct"/>
</dbReference>
<dbReference type="GO" id="GO:0140677">
    <property type="term" value="F:molecular function activator activity"/>
    <property type="evidence" value="ECO:0000269"/>
    <property type="project" value="DisProt"/>
</dbReference>
<dbReference type="GO" id="GO:0004252">
    <property type="term" value="F:serine-type endopeptidase activity"/>
    <property type="evidence" value="ECO:0000318"/>
    <property type="project" value="GO_Central"/>
</dbReference>
<dbReference type="GO" id="GO:0008236">
    <property type="term" value="F:serine-type peptidase activity"/>
    <property type="evidence" value="ECO:0000250"/>
    <property type="project" value="UniProtKB"/>
</dbReference>
<dbReference type="GO" id="GO:0060718">
    <property type="term" value="P:chorionic trophoblast cell differentiation"/>
    <property type="evidence" value="ECO:0007669"/>
    <property type="project" value="Ensembl"/>
</dbReference>
<dbReference type="GO" id="GO:0030514">
    <property type="term" value="P:negative regulation of BMP signaling pathway"/>
    <property type="evidence" value="ECO:0007669"/>
    <property type="project" value="Ensembl"/>
</dbReference>
<dbReference type="GO" id="GO:0030512">
    <property type="term" value="P:negative regulation of transforming growth factor beta receptor signaling pathway"/>
    <property type="evidence" value="ECO:0007669"/>
    <property type="project" value="Ensembl"/>
</dbReference>
<dbReference type="GO" id="GO:0001890">
    <property type="term" value="P:placenta development"/>
    <property type="evidence" value="ECO:0007669"/>
    <property type="project" value="Ensembl"/>
</dbReference>
<dbReference type="GO" id="GO:0043065">
    <property type="term" value="P:positive regulation of apoptotic process"/>
    <property type="evidence" value="ECO:0000318"/>
    <property type="project" value="GO_Central"/>
</dbReference>
<dbReference type="GO" id="GO:0012501">
    <property type="term" value="P:programmed cell death"/>
    <property type="evidence" value="ECO:0000318"/>
    <property type="project" value="GO_Central"/>
</dbReference>
<dbReference type="GO" id="GO:0006508">
    <property type="term" value="P:proteolysis"/>
    <property type="evidence" value="ECO:0000250"/>
    <property type="project" value="UniProtKB"/>
</dbReference>
<dbReference type="CDD" id="cd06785">
    <property type="entry name" value="cpPDZ_HtrA-like"/>
    <property type="match status" value="1"/>
</dbReference>
<dbReference type="CDD" id="cd00104">
    <property type="entry name" value="KAZAL_FS"/>
    <property type="match status" value="1"/>
</dbReference>
<dbReference type="FunFam" id="2.40.10.120:FF:000002">
    <property type="entry name" value="HtrA serine peptidase 3"/>
    <property type="match status" value="1"/>
</dbReference>
<dbReference type="FunFam" id="4.10.40.20:FF:000004">
    <property type="entry name" value="HtrA serine peptidase 3"/>
    <property type="match status" value="1"/>
</dbReference>
<dbReference type="FunFam" id="3.30.60.30:FF:000026">
    <property type="entry name" value="Insulin-like growth factor-binding protein 7"/>
    <property type="match status" value="1"/>
</dbReference>
<dbReference type="FunFam" id="2.30.42.10:FF:000142">
    <property type="entry name" value="Serine protease HTRA1"/>
    <property type="match status" value="1"/>
</dbReference>
<dbReference type="Gene3D" id="2.30.42.10">
    <property type="match status" value="1"/>
</dbReference>
<dbReference type="Gene3D" id="2.40.10.120">
    <property type="match status" value="1"/>
</dbReference>
<dbReference type="Gene3D" id="3.30.60.30">
    <property type="match status" value="1"/>
</dbReference>
<dbReference type="Gene3D" id="4.10.40.20">
    <property type="match status" value="1"/>
</dbReference>
<dbReference type="InterPro" id="IPR009030">
    <property type="entry name" value="Growth_fac_rcpt_cys_sf"/>
</dbReference>
<dbReference type="InterPro" id="IPR000867">
    <property type="entry name" value="IGFBP-like"/>
</dbReference>
<dbReference type="InterPro" id="IPR002350">
    <property type="entry name" value="Kazal_dom"/>
</dbReference>
<dbReference type="InterPro" id="IPR036058">
    <property type="entry name" value="Kazal_dom_sf"/>
</dbReference>
<dbReference type="InterPro" id="IPR001478">
    <property type="entry name" value="PDZ"/>
</dbReference>
<dbReference type="InterPro" id="IPR041489">
    <property type="entry name" value="PDZ_6"/>
</dbReference>
<dbReference type="InterPro" id="IPR036034">
    <property type="entry name" value="PDZ_sf"/>
</dbReference>
<dbReference type="InterPro" id="IPR009003">
    <property type="entry name" value="Peptidase_S1_PA"/>
</dbReference>
<dbReference type="InterPro" id="IPR001940">
    <property type="entry name" value="Peptidase_S1C"/>
</dbReference>
<dbReference type="PANTHER" id="PTHR22939">
    <property type="entry name" value="SERINE PROTEASE FAMILY S1C HTRA-RELATED"/>
    <property type="match status" value="1"/>
</dbReference>
<dbReference type="PANTHER" id="PTHR22939:SF13">
    <property type="entry name" value="SERINE PROTEASE HTRA1"/>
    <property type="match status" value="1"/>
</dbReference>
<dbReference type="Pfam" id="PF00219">
    <property type="entry name" value="IGFBP"/>
    <property type="match status" value="1"/>
</dbReference>
<dbReference type="Pfam" id="PF07648">
    <property type="entry name" value="Kazal_2"/>
    <property type="match status" value="1"/>
</dbReference>
<dbReference type="Pfam" id="PF17820">
    <property type="entry name" value="PDZ_6"/>
    <property type="match status" value="1"/>
</dbReference>
<dbReference type="Pfam" id="PF13365">
    <property type="entry name" value="Trypsin_2"/>
    <property type="match status" value="1"/>
</dbReference>
<dbReference type="PRINTS" id="PR00834">
    <property type="entry name" value="PROTEASES2C"/>
</dbReference>
<dbReference type="SMART" id="SM00121">
    <property type="entry name" value="IB"/>
    <property type="match status" value="1"/>
</dbReference>
<dbReference type="SMART" id="SM00280">
    <property type="entry name" value="KAZAL"/>
    <property type="match status" value="1"/>
</dbReference>
<dbReference type="SMART" id="SM00228">
    <property type="entry name" value="PDZ"/>
    <property type="match status" value="1"/>
</dbReference>
<dbReference type="SUPFAM" id="SSF57184">
    <property type="entry name" value="Growth factor receptor domain"/>
    <property type="match status" value="1"/>
</dbReference>
<dbReference type="SUPFAM" id="SSF100895">
    <property type="entry name" value="Kazal-type serine protease inhibitors"/>
    <property type="match status" value="1"/>
</dbReference>
<dbReference type="SUPFAM" id="SSF50156">
    <property type="entry name" value="PDZ domain-like"/>
    <property type="match status" value="1"/>
</dbReference>
<dbReference type="SUPFAM" id="SSF50494">
    <property type="entry name" value="Trypsin-like serine proteases"/>
    <property type="match status" value="1"/>
</dbReference>
<dbReference type="PROSITE" id="PS51323">
    <property type="entry name" value="IGFBP_N_2"/>
    <property type="match status" value="1"/>
</dbReference>
<dbReference type="PROSITE" id="PS51465">
    <property type="entry name" value="KAZAL_2"/>
    <property type="match status" value="1"/>
</dbReference>
<dbReference type="PROSITE" id="PS50106">
    <property type="entry name" value="PDZ"/>
    <property type="match status" value="1"/>
</dbReference>
<evidence type="ECO:0000250" key="1"/>
<evidence type="ECO:0000255" key="2"/>
<evidence type="ECO:0000255" key="3">
    <source>
        <dbReference type="PROSITE-ProRule" id="PRU00143"/>
    </source>
</evidence>
<evidence type="ECO:0000255" key="4">
    <source>
        <dbReference type="PROSITE-ProRule" id="PRU00653"/>
    </source>
</evidence>
<evidence type="ECO:0000255" key="5">
    <source>
        <dbReference type="PROSITE-ProRule" id="PRU00798"/>
    </source>
</evidence>
<evidence type="ECO:0000269" key="6">
    <source>
    </source>
</evidence>
<evidence type="ECO:0000269" key="7">
    <source>
    </source>
</evidence>
<evidence type="ECO:0000269" key="8">
    <source>
    </source>
</evidence>
<evidence type="ECO:0000269" key="9">
    <source>
    </source>
</evidence>
<evidence type="ECO:0000269" key="10">
    <source>
    </source>
</evidence>
<evidence type="ECO:0000269" key="11">
    <source>
    </source>
</evidence>
<evidence type="ECO:0000269" key="12">
    <source>
    </source>
</evidence>
<evidence type="ECO:0000269" key="13">
    <source>
    </source>
</evidence>
<evidence type="ECO:0000269" key="14">
    <source>
    </source>
</evidence>
<evidence type="ECO:0000305" key="15"/>
<evidence type="ECO:0007829" key="16">
    <source>
        <dbReference type="PDB" id="2JOA"/>
    </source>
</evidence>
<evidence type="ECO:0007829" key="17">
    <source>
        <dbReference type="PDB" id="2YTW"/>
    </source>
</evidence>
<evidence type="ECO:0007829" key="18">
    <source>
        <dbReference type="PDB" id="3NUM"/>
    </source>
</evidence>
<evidence type="ECO:0007829" key="19">
    <source>
        <dbReference type="PDB" id="3NZI"/>
    </source>
</evidence>
<evidence type="ECO:0007829" key="20">
    <source>
        <dbReference type="PDB" id="3TJN"/>
    </source>
</evidence>
<evidence type="ECO:0007829" key="21">
    <source>
        <dbReference type="PDB" id="3TJO"/>
    </source>
</evidence>
<evidence type="ECO:0007829" key="22">
    <source>
        <dbReference type="PDB" id="3TJQ"/>
    </source>
</evidence>
<evidence type="ECO:0007829" key="23">
    <source>
        <dbReference type="PDB" id="6Z0E"/>
    </source>
</evidence>
<evidence type="ECO:0007829" key="24">
    <source>
        <dbReference type="PDB" id="6Z0Y"/>
    </source>
</evidence>
<evidence type="ECO:0007829" key="25">
    <source>
        <dbReference type="PDB" id="7SJP"/>
    </source>
</evidence>
<name>HTRA1_HUMAN</name>
<comment type="function">
    <text evidence="7 11 14">Serine protease with a variety of targets, including extracellular matrix proteins such as fibronectin. HTRA1-generated fibronectin fragments further induce synovial cells to up-regulate MMP1 and MMP3 production. May also degrade proteoglycans, such as aggrecan, decorin and fibromodulin. Through cleavage of proteoglycans, may release soluble FGF-glycosaminoglycan complexes that promote the range and intensity of FGF signals in the extracellular space. Regulates the availability of insulin-like growth factors (IGFs) by cleaving IGF-binding proteins. Inhibits signaling mediated by TGF-beta family members. This activity requires the integrity of the catalytic site, although it is unclear whether TGF-beta proteins are themselves degraded. By acting on TGF-beta signaling, may regulate many physiological processes, including retinal angiogenesis and neuronal survival and maturation during development. Intracellularly, degrades TSC2, leading to the activation of TSC2 downstream targets.</text>
</comment>
<comment type="subunit">
    <text evidence="1">Forms homotrimers. In the presence of substrate, may form higher-order multimers in a PDZ-independent manner. Interacts with TGF-beta family members, including BMP4, TGFB1, TGFB2, activin A and GDF5 (By similarity).</text>
</comment>
<comment type="interaction">
    <interactant intactId="EBI-352256">
        <id>Q92743</id>
    </interactant>
    <interactant intactId="EBI-352256">
        <id>Q92743</id>
        <label>HTRA1</label>
    </interactant>
    <organismsDiffer>false</organismsDiffer>
    <experiments>7</experiments>
</comment>
<comment type="interaction">
    <interactant intactId="EBI-352256">
        <id>Q92743</id>
    </interactant>
    <interactant intactId="EBI-21776319">
        <id>P83105</id>
        <label>HTRA4</label>
    </interactant>
    <organismsDiffer>false</organismsDiffer>
    <experiments>5</experiments>
</comment>
<comment type="interaction">
    <interactant intactId="EBI-352256">
        <id>Q92743</id>
    </interactant>
    <interactant intactId="EBI-366233">
        <id>P10636-8</id>
        <label>MAPT</label>
    </interactant>
    <organismsDiffer>false</organismsDiffer>
    <experiments>9</experiments>
</comment>
<comment type="interaction">
    <interactant intactId="EBI-352256">
        <id>Q92743</id>
    </interactant>
    <interactant intactId="EBI-372712">
        <id>P14174</id>
        <label>MIF</label>
    </interactant>
    <organismsDiffer>false</organismsDiffer>
    <experiments>3</experiments>
</comment>
<comment type="interaction">
    <interactant intactId="EBI-352256">
        <id>Q92743</id>
    </interactant>
    <interactant intactId="EBI-13915509">
        <id>PRO_0000035842</id>
        <label>THBS1</label>
        <dbReference type="UniProtKB" id="P07996"/>
    </interactant>
    <organismsDiffer>false</organismsDiffer>
    <experiments>2</experiments>
</comment>
<comment type="subcellular location">
    <subcellularLocation>
        <location evidence="12">Cell membrane</location>
    </subcellularLocation>
    <subcellularLocation>
        <location evidence="6 14">Secreted</location>
    </subcellularLocation>
    <subcellularLocation>
        <location evidence="6 11">Cytoplasm</location>
        <location evidence="6 11">Cytosol</location>
    </subcellularLocation>
    <text evidence="6 12">Predominantly secreted (PubMed:15208355). Also found associated with the plasma membrane (PubMed:21297635).</text>
</comment>
<comment type="tissue specificity">
    <text evidence="6 7 14">Widely expressed, with strongest expression in placenta (at protein level). Secreted by synovial fibroblasts. Up-regulated in osteoarthritis and rheumatoid arthritis synovial fluids and cartilage as compared with non-arthritic (at protein level).</text>
</comment>
<comment type="developmental stage">
    <text evidence="6">In the placenta, in the first trimester of gestation, low expression in the cells surrounding villi both in the inner layer of the cytotrophoblast and in the outer layer of the syncytiotrophoblast (at protein level). In the third trimester of gestation, very strong expression in the outer layer forming the syncytiotrophoblast and lower in the cytotrophoblast (at protein level).</text>
</comment>
<comment type="domain">
    <text>The IGFBP N-terminal domain mediates interaction with TSC2 substrate.</text>
</comment>
<comment type="disease" evidence="8 9">
    <disease id="DI-00060">
        <name>Macular degeneration, age-related, 7</name>
        <acronym>ARMD7</acronym>
        <description>A form of age-related macular degeneration, a multifactorial eye disease and the most common cause of irreversible vision loss in the developed world. In most patients, the disease is manifest as ophthalmoscopically visible yellowish accumulations of protein and lipid that lie beneath the retinal pigment epithelium and within an elastin-containing structure known as Bruch membrane.</description>
        <dbReference type="MIM" id="610149"/>
    </disease>
    <text>Disease susceptibility is associated with variants affecting the gene represented in this entry.</text>
</comment>
<comment type="disease" evidence="10">
    <disease id="DI-02549">
        <name>Cerebral arteriopathy, autosomal recessive, with subcortical infarcts and leukoencephalopathy</name>
        <acronym>CARASIL</acronym>
        <description>A cerebrovascular disease characterized by non-hypertensive arteriopathy of cerebral small vessels with subcortical infarcts, alopecia, and spondylosis. Small cerebral arteries show arteriosclerotic changes, fibrous intimal proliferation, and hyaline degeneration with splitting of the intima and/or the internal elastic membrane. Neurologic features include progressive dementia, gait disturbances, extrapyramidal and pyramidal signs, and demyelination of the cerebral white matter with sparing of U fibers.</description>
        <dbReference type="MIM" id="600142"/>
    </disease>
    <text>The disease is caused by variants affecting the gene represented in this entry.</text>
</comment>
<comment type="disease" evidence="13">
    <disease id="DI-04641">
        <name>Cerebral arteriopathy, autosomal dominant, with subcortical infarcts and leukoencephalopathy, 2</name>
        <acronym>CADASIL2</acronym>
        <description>A cerebrovascular disease characterized by multiple subcortical infarcts, pseudobulbar palsy, dementia, and the presence of granular deposits in small cerebral arteries producing ischemic stroke.</description>
        <dbReference type="MIM" id="616779"/>
    </disease>
    <text>The disease is caused by variants affecting the gene represented in this entry.</text>
</comment>
<comment type="similarity">
    <text evidence="15">Belongs to the peptidase S1C family.</text>
</comment>
<comment type="online information" name="Atlas of Genetics and Cytogenetics in Oncology and Haematology">
    <link uri="https://atlasgeneticsoncology.org/gene/41877/HTRA1"/>
</comment>
<gene>
    <name type="primary">HTRA1</name>
    <name type="synonym">HTRA</name>
    <name type="synonym">PRSS11</name>
</gene>
<proteinExistence type="evidence at protein level"/>
<sequence>MQIPRAALLPLLLLLLAAPASAQLSRAGRSAPLAAGCPDRCEPARCPPQPEHCEGGRARDACGCCEVCGAPEGAACGLQEGPCGEGLQCVVPFGVPASATVRRRAQAGLCVCASSEPVCGSDANTYANLCQLRAASRRSERLHRPPVIVLQRGACGQGQEDPNSLRHKYNFIADVVEKIAPAVVHIELFRKLPFSKREVPVASGSGFIVSEDGLIVTNAHVVTNKHRVKVELKNGATYEAKIKDVDEKADIALIKIDHQGKLPVLLLGRSSELRPGEFVVAIGSPFSLQNTVTTGIVSTTQRGGKELGLRNSDMDYIQTDAIINYGNSGGPLVNLDGEVIGINTLKVTAGISFAIPSDKIKKFLTESHDRQAKGKAITKKKYIGIRMMSLTSSKAKELKDRHRDFPDVISGAYIIEVIPDTPAEAGGLKENDVIISINGQSVVSANDVSDVIKRESTLNMVVRRGNEDIMITVIPEEIDP</sequence>
<keyword id="KW-0002">3D-structure</keyword>
<keyword id="KW-0913">Age-related macular degeneration</keyword>
<keyword id="KW-1003">Cell membrane</keyword>
<keyword id="KW-0963">Cytoplasm</keyword>
<keyword id="KW-0903">Direct protein sequencing</keyword>
<keyword id="KW-0225">Disease variant</keyword>
<keyword id="KW-1015">Disulfide bond</keyword>
<keyword id="KW-0340">Growth factor binding</keyword>
<keyword id="KW-0378">Hydrolase</keyword>
<keyword id="KW-0472">Membrane</keyword>
<keyword id="KW-0645">Protease</keyword>
<keyword id="KW-1267">Proteomics identification</keyword>
<keyword id="KW-1185">Reference proteome</keyword>
<keyword id="KW-0964">Secreted</keyword>
<keyword id="KW-0720">Serine protease</keyword>
<keyword id="KW-0732">Signal</keyword>